<gene>
    <name type="ordered locus">BC_5087</name>
</gene>
<gene>
    <name type="ordered locus">BC_5088</name>
</gene>
<gene>
    <name type="ordered locus">BC_5089</name>
</gene>
<gene>
    <name type="ordered locus">BC_5090</name>
</gene>
<dbReference type="EMBL" id="AE016877">
    <property type="protein sequence ID" value="AAP11956.1"/>
    <property type="molecule type" value="Genomic_DNA"/>
</dbReference>
<dbReference type="EMBL" id="AE016877">
    <property type="protein sequence ID" value="AAP11957.1"/>
    <property type="molecule type" value="Genomic_DNA"/>
</dbReference>
<dbReference type="EMBL" id="AE016877">
    <property type="protein sequence ID" value="AAP11958.1"/>
    <property type="molecule type" value="Genomic_DNA"/>
</dbReference>
<dbReference type="EMBL" id="AE016877">
    <property type="protein sequence ID" value="AAP11959.1"/>
    <property type="molecule type" value="Genomic_DNA"/>
</dbReference>
<dbReference type="RefSeq" id="NP_834755.1">
    <property type="nucleotide sequence ID" value="NC_004722.1"/>
</dbReference>
<dbReference type="RefSeq" id="NP_834756.1">
    <property type="nucleotide sequence ID" value="NC_004722.1"/>
</dbReference>
<dbReference type="RefSeq" id="NP_834757.1">
    <property type="nucleotide sequence ID" value="NC_004722.1"/>
</dbReference>
<dbReference type="RefSeq" id="NP_834758.1">
    <property type="nucleotide sequence ID" value="NC_004722.1"/>
</dbReference>
<dbReference type="RefSeq" id="WP_001289699.1">
    <property type="nucleotide sequence ID" value="NC_004722.1"/>
</dbReference>
<dbReference type="SMR" id="Q812G9"/>
<dbReference type="STRING" id="226900.BC_5087"/>
<dbReference type="iPTMnet" id="Q812G9"/>
<dbReference type="KEGG" id="bce:BC5087"/>
<dbReference type="KEGG" id="bce:BC5088"/>
<dbReference type="KEGG" id="bce:BC5089"/>
<dbReference type="KEGG" id="bce:BC5090"/>
<dbReference type="PATRIC" id="fig|226900.8.peg.5246"/>
<dbReference type="HOGENOM" id="CLU_3076638_0_0_9"/>
<dbReference type="Proteomes" id="UP000001417">
    <property type="component" value="Chromosome"/>
</dbReference>
<dbReference type="GO" id="GO:0005576">
    <property type="term" value="C:extracellular region"/>
    <property type="evidence" value="ECO:0007669"/>
    <property type="project" value="UniProtKB-SubCell"/>
</dbReference>
<dbReference type="GO" id="GO:0042742">
    <property type="term" value="P:defense response to bacterium"/>
    <property type="evidence" value="ECO:0007669"/>
    <property type="project" value="UniProtKB-KW"/>
</dbReference>
<dbReference type="GO" id="GO:0031640">
    <property type="term" value="P:killing of cells of another organism"/>
    <property type="evidence" value="ECO:0007669"/>
    <property type="project" value="UniProtKB-KW"/>
</dbReference>
<dbReference type="InterPro" id="IPR023895">
    <property type="entry name" value="Thiopep_bacteriocin_prcur"/>
</dbReference>
<dbReference type="NCBIfam" id="NF033401">
    <property type="entry name" value="thiazolyl_BerA"/>
    <property type="match status" value="1"/>
</dbReference>
<dbReference type="NCBIfam" id="TIGR03892">
    <property type="entry name" value="thiopep_precurs"/>
    <property type="match status" value="1"/>
</dbReference>
<reference key="1">
    <citation type="journal article" date="2003" name="Nature">
        <title>Genome sequence of Bacillus cereus and comparative analysis with Bacillus anthracis.</title>
        <authorList>
            <person name="Ivanova N."/>
            <person name="Sorokin A."/>
            <person name="Anderson I."/>
            <person name="Galleron N."/>
            <person name="Candelon B."/>
            <person name="Kapatral V."/>
            <person name="Bhattacharyya A."/>
            <person name="Reznik G."/>
            <person name="Mikhailova N."/>
            <person name="Lapidus A."/>
            <person name="Chu L."/>
            <person name="Mazur M."/>
            <person name="Goltsman E."/>
            <person name="Larsen N."/>
            <person name="D'Souza M."/>
            <person name="Walunas T."/>
            <person name="Grechkin Y."/>
            <person name="Pusch G."/>
            <person name="Haselkorn R."/>
            <person name="Fonstein M."/>
            <person name="Ehrlich S.D."/>
            <person name="Overbeek R."/>
            <person name="Kyrpides N.C."/>
        </authorList>
    </citation>
    <scope>NUCLEOTIDE SEQUENCE [LARGE SCALE GENOMIC DNA]</scope>
    <source>
        <strain>ATCC 14579 / DSM 31 / CCUG 7414 / JCM 2152 / NBRC 15305 / NCIMB 9373 / NCTC 2599 / NRRL B-3711</strain>
    </source>
</reference>
<reference key="2">
    <citation type="unpublished observations" date="2008-11">
        <authorList>
            <person name="Garavelli J.S."/>
        </authorList>
    </citation>
    <scope>IDENTIFICATION AS THIOCILLIN</scope>
</reference>
<reference key="3">
    <citation type="journal article" date="2009" name="Proc. Natl. Acad. Sci. U.S.A.">
        <title>Thirteen posttranslational modifications convert a 14-residue peptide into the antibiotic thiocillin.</title>
        <authorList>
            <person name="Brown L.C.W."/>
            <person name="Acker M.G."/>
            <person name="Clardy J."/>
            <person name="Walsh C.T."/>
            <person name="Fischbach M.A."/>
        </authorList>
    </citation>
    <scope>DEHYDRATION AT THR-42 AND THR-51</scope>
    <scope>HYDROXYLATION AT VAL-44</scope>
    <scope>METHYLATION AT THR-46</scope>
    <scope>DECARBOXYLATION AT THR-52</scope>
</reference>
<name>THCL_BACCR</name>
<feature type="propeptide" id="PRO_0000363165" evidence="1">
    <location>
        <begin position="1"/>
        <end position="38"/>
    </location>
</feature>
<feature type="peptide" id="PRO_0000363166" description="Thiocillin">
    <location>
        <begin position="39"/>
        <end position="52"/>
    </location>
</feature>
<feature type="modified residue" description="(Z)-2,3-didehydrobutyrine" evidence="2">
    <location>
        <position position="42"/>
    </location>
</feature>
<feature type="modified residue" description="3-hydroxyvaline (Val); partial" evidence="2">
    <location>
        <position position="44"/>
    </location>
</feature>
<feature type="modified residue" description="O-methylthreonine; partial" evidence="2">
    <location>
        <position position="46"/>
    </location>
</feature>
<feature type="modified residue" description="(Z)-2,3-didehydrobutyrine" evidence="2">
    <location>
        <position position="51"/>
    </location>
</feature>
<feature type="modified residue" description="1-amino-2-propanone; alternate">
    <location>
        <position position="52"/>
    </location>
</feature>
<feature type="modified residue" description="Decarboxylated threonine; alternate" evidence="2">
    <location>
        <position position="52"/>
    </location>
</feature>
<feature type="cross-link" description="Pyridine-2,5-dicarboxylic acid (Ser-Ser) (with C-47)">
    <location>
        <begin position="39"/>
        <end position="48"/>
    </location>
</feature>
<feature type="cross-link" description="Pyridine-2,5-dicarboxylic acid (Ser-Cys) (with S-48)">
    <location>
        <begin position="39"/>
        <end position="47"/>
    </location>
</feature>
<feature type="cross-link" description="Thiazole-4-carboxylic acid (Ser-Cys)">
    <location>
        <begin position="39"/>
        <end position="40"/>
    </location>
</feature>
<feature type="cross-link" description="Thiazole-4-carboxylic acid (Thr-Cys)">
    <location>
        <begin position="42"/>
        <end position="43"/>
    </location>
</feature>
<feature type="cross-link" description="Thiazole-4-carboxylic acid (Val-Cys)">
    <location>
        <begin position="44"/>
        <end position="45"/>
    </location>
</feature>
<feature type="cross-link" description="Thiazole-4-carboxylic acid (Thr-Cys)">
    <location>
        <begin position="46"/>
        <end position="47"/>
    </location>
</feature>
<feature type="cross-link" description="Thiazole-4-carboxylic acid (Ser-Cys)">
    <location>
        <begin position="48"/>
        <end position="49"/>
    </location>
</feature>
<feature type="cross-link" description="Thiazole-4-carboxylic acid (Cys-Cys)">
    <location>
        <begin position="49"/>
        <end position="50"/>
    </location>
</feature>
<keyword id="KW-0044">Antibiotic</keyword>
<keyword id="KW-0929">Antimicrobial</keyword>
<keyword id="KW-0078">Bacteriocin</keyword>
<keyword id="KW-0379">Hydroxylation</keyword>
<keyword id="KW-0488">Methylation</keyword>
<keyword id="KW-1185">Reference proteome</keyword>
<keyword id="KW-0964">Secreted</keyword>
<keyword id="KW-0883">Thioether bond</keyword>
<organism>
    <name type="scientific">Bacillus cereus (strain ATCC 14579 / DSM 31 / CCUG 7414 / JCM 2152 / NBRC 15305 / NCIMB 9373 / NCTC 2599 / NRRL B-3711)</name>
    <dbReference type="NCBI Taxonomy" id="226900"/>
    <lineage>
        <taxon>Bacteria</taxon>
        <taxon>Bacillati</taxon>
        <taxon>Bacillota</taxon>
        <taxon>Bacilli</taxon>
        <taxon>Bacillales</taxon>
        <taxon>Bacillaceae</taxon>
        <taxon>Bacillus</taxon>
        <taxon>Bacillus cereus group</taxon>
    </lineage>
</organism>
<evidence type="ECO:0000250" key="1"/>
<evidence type="ECO:0000269" key="2">
    <source>
    </source>
</evidence>
<evidence type="ECO:0000305" key="3"/>
<comment type="function">
    <text evidence="1">Has bacteriocidal activity against Gram-positive bacteria, but not against Gram-negative bacteria. Inhibits bacterial protein biosynthesis by acting on the elongation factor Tu (EF-Tu) (By similarity).</text>
</comment>
<comment type="subcellular location">
    <subcellularLocation>
        <location evidence="1">Secreted</location>
    </subcellularLocation>
</comment>
<comment type="PTM">
    <text>Maturation of thiazole and oxazole containing antibiotics involves the enzymatic condensation of a Cys, Ser or Thr with the alpha-carbonyl of the preceding amino acid to form a thioether or ether bond, then dehydration to form a double bond with the alpha-amino nitrogen. Thiazoline or oxazoline ring are dehydrogenated to form thiazole or oxazole rings.</text>
</comment>
<comment type="PTM">
    <text>Maturation of pyridinyl containing antibiotics involves the cross-linking of a Ser and a Cys-Ser pair usually separated by 7 or 8 residues along the peptide chain. The Ser residues are dehydrated to didehydroalanines, then bonded between their beta carbons. The alpha carbonyl of the Cys condenses with alpha carbon of the first Ser to form a pyridinyl ring. The ring may be multiply dehydrogenated to form a pyridine ring with loss of the amino nitrogen of the first Ser.</text>
</comment>
<comment type="PTM">
    <text evidence="2">The 8 possible modification isomers, differing in the presence of modifications at three positions, have been characterized in PubMed:19196969. Val-44 is modified to 3-hydroxyvaline in forms thiocillin I, thiocillin II, YM-266183, and YM-266184. Thr-46 is modified to O-methylthreonine in forms thiocillin II, thiocillin III, thiocillin IV, and YM-266184. Thr-52 is decarboxylated to (R)-1-aminopropan-2-ol in forms micrococcin P1, thiocillin I, thiocillin II, and thiocillin III. Thr-52 is decarboxylated and oxidized to 1-amino-2-propanone in forms micrococcin P2, YM-266183, YM-266184. and thiocillin IV.</text>
</comment>
<comment type="PTM">
    <text>The structure of 2,3-didehydrobutyrines is not discussed in PubMed:19196969. However, in Fig. 3 the residues are diagrammed as Z-isomers.</text>
</comment>
<comment type="similarity">
    <text evidence="3">Belongs to the thiocillin family.</text>
</comment>
<protein>
    <recommendedName>
        <fullName>Thiocillin</fullName>
    </recommendedName>
    <alternativeName>
        <fullName>Antibiotic YM-266183</fullName>
    </alternativeName>
    <alternativeName>
        <fullName>Antibiotic YM-266184</fullName>
    </alternativeName>
    <alternativeName>
        <fullName>Micrococcin P1</fullName>
    </alternativeName>
    <alternativeName>
        <fullName>Micrococcin P2</fullName>
    </alternativeName>
    <alternativeName>
        <fullName>Thiocillin I</fullName>
    </alternativeName>
    <alternativeName>
        <fullName>Thiocillin II</fullName>
    </alternativeName>
    <alternativeName>
        <fullName>Thiocillin III</fullName>
    </alternativeName>
    <alternativeName>
        <fullName>Thiocillin IV</fullName>
    </alternativeName>
</protein>
<accession>Q812G9</accession>
<proteinExistence type="evidence at protein level"/>
<sequence>MSEIKKALNTLEIEDFDAIEMVDVDAMPENEALEIMGASCTTCVCTCSCCTT</sequence>